<keyword id="KW-0963">Cytoplasm</keyword>
<keyword id="KW-0489">Methyltransferase</keyword>
<keyword id="KW-0698">rRNA processing</keyword>
<keyword id="KW-0949">S-adenosyl-L-methionine</keyword>
<keyword id="KW-0808">Transferase</keyword>
<name>RSMH_YERPA</name>
<reference key="1">
    <citation type="journal article" date="2006" name="J. Bacteriol.">
        <title>Complete genome sequence of Yersinia pestis strains Antiqua and Nepal516: evidence of gene reduction in an emerging pathogen.</title>
        <authorList>
            <person name="Chain P.S.G."/>
            <person name="Hu P."/>
            <person name="Malfatti S.A."/>
            <person name="Radnedge L."/>
            <person name="Larimer F."/>
            <person name="Vergez L.M."/>
            <person name="Worsham P."/>
            <person name="Chu M.C."/>
            <person name="Andersen G.L."/>
        </authorList>
    </citation>
    <scope>NUCLEOTIDE SEQUENCE [LARGE SCALE GENOMIC DNA]</scope>
    <source>
        <strain>Antiqua</strain>
    </source>
</reference>
<dbReference type="EC" id="2.1.1.199" evidence="1"/>
<dbReference type="EMBL" id="CP000308">
    <property type="protein sequence ID" value="ABG15516.1"/>
    <property type="molecule type" value="Genomic_DNA"/>
</dbReference>
<dbReference type="RefSeq" id="WP_002210442.1">
    <property type="nucleotide sequence ID" value="NZ_CP009906.1"/>
</dbReference>
<dbReference type="SMR" id="Q1C206"/>
<dbReference type="GeneID" id="57974068"/>
<dbReference type="KEGG" id="ypa:YPA_3554"/>
<dbReference type="Proteomes" id="UP000001971">
    <property type="component" value="Chromosome"/>
</dbReference>
<dbReference type="GO" id="GO:0005737">
    <property type="term" value="C:cytoplasm"/>
    <property type="evidence" value="ECO:0007669"/>
    <property type="project" value="UniProtKB-SubCell"/>
</dbReference>
<dbReference type="GO" id="GO:0071424">
    <property type="term" value="F:rRNA (cytosine-N4-)-methyltransferase activity"/>
    <property type="evidence" value="ECO:0007669"/>
    <property type="project" value="UniProtKB-UniRule"/>
</dbReference>
<dbReference type="GO" id="GO:0070475">
    <property type="term" value="P:rRNA base methylation"/>
    <property type="evidence" value="ECO:0007669"/>
    <property type="project" value="UniProtKB-UniRule"/>
</dbReference>
<dbReference type="FunFam" id="1.10.150.170:FF:000001">
    <property type="entry name" value="Ribosomal RNA small subunit methyltransferase H"/>
    <property type="match status" value="1"/>
</dbReference>
<dbReference type="Gene3D" id="1.10.150.170">
    <property type="entry name" value="Putative methyltransferase TM0872, insert domain"/>
    <property type="match status" value="1"/>
</dbReference>
<dbReference type="Gene3D" id="3.40.50.150">
    <property type="entry name" value="Vaccinia Virus protein VP39"/>
    <property type="match status" value="1"/>
</dbReference>
<dbReference type="HAMAP" id="MF_01007">
    <property type="entry name" value="16SrRNA_methyltr_H"/>
    <property type="match status" value="1"/>
</dbReference>
<dbReference type="InterPro" id="IPR002903">
    <property type="entry name" value="RsmH"/>
</dbReference>
<dbReference type="InterPro" id="IPR023397">
    <property type="entry name" value="SAM-dep_MeTrfase_MraW_recog"/>
</dbReference>
<dbReference type="InterPro" id="IPR029063">
    <property type="entry name" value="SAM-dependent_MTases_sf"/>
</dbReference>
<dbReference type="NCBIfam" id="TIGR00006">
    <property type="entry name" value="16S rRNA (cytosine(1402)-N(4))-methyltransferase RsmH"/>
    <property type="match status" value="1"/>
</dbReference>
<dbReference type="PANTHER" id="PTHR11265:SF0">
    <property type="entry name" value="12S RRNA N4-METHYLCYTIDINE METHYLTRANSFERASE"/>
    <property type="match status" value="1"/>
</dbReference>
<dbReference type="PANTHER" id="PTHR11265">
    <property type="entry name" value="S-ADENOSYL-METHYLTRANSFERASE MRAW"/>
    <property type="match status" value="1"/>
</dbReference>
<dbReference type="Pfam" id="PF01795">
    <property type="entry name" value="Methyltransf_5"/>
    <property type="match status" value="1"/>
</dbReference>
<dbReference type="PIRSF" id="PIRSF004486">
    <property type="entry name" value="MraW"/>
    <property type="match status" value="1"/>
</dbReference>
<dbReference type="SUPFAM" id="SSF81799">
    <property type="entry name" value="Putative methyltransferase TM0872, insert domain"/>
    <property type="match status" value="1"/>
</dbReference>
<dbReference type="SUPFAM" id="SSF53335">
    <property type="entry name" value="S-adenosyl-L-methionine-dependent methyltransferases"/>
    <property type="match status" value="1"/>
</dbReference>
<sequence>MVDNNKTVDNNYKHTSVLLDEAVKGLNIRDNGIYIDGTFGRGGHSRLILSQLGPEGRLIAIDRDPEAIEAAKQITDPRFSIVHGPFSDLAHYVRDLDLVGRIDGILLDLGVSSPQLDDAERGFSFMRDGPLDMRMDPSRGLSAAEWLMKASADDIAWVLKTFGEERFAKRLAKAIVERNLTQPMTRTKELADLIANASPFRDKHKHPATRSFQAIRIYINSELEEIERALDGAHEVLAPEGRLSVISFHSLEDRIVKNFIRHHSRGPQVPAGLPLTEAQLRSMGGRTLKSVGKMMPGDAEIAENPRARSSVLRFAERIGE</sequence>
<gene>
    <name evidence="1" type="primary">rsmH</name>
    <name type="synonym">mraW</name>
    <name type="ordered locus">YPA_3554</name>
</gene>
<feature type="chain" id="PRO_0000387221" description="Ribosomal RNA small subunit methyltransferase H">
    <location>
        <begin position="1"/>
        <end position="320"/>
    </location>
</feature>
<feature type="binding site" evidence="1">
    <location>
        <begin position="42"/>
        <end position="44"/>
    </location>
    <ligand>
        <name>S-adenosyl-L-methionine</name>
        <dbReference type="ChEBI" id="CHEBI:59789"/>
    </ligand>
</feature>
<feature type="binding site" evidence="1">
    <location>
        <position position="62"/>
    </location>
    <ligand>
        <name>S-adenosyl-L-methionine</name>
        <dbReference type="ChEBI" id="CHEBI:59789"/>
    </ligand>
</feature>
<feature type="binding site" evidence="1">
    <location>
        <position position="86"/>
    </location>
    <ligand>
        <name>S-adenosyl-L-methionine</name>
        <dbReference type="ChEBI" id="CHEBI:59789"/>
    </ligand>
</feature>
<feature type="binding site" evidence="1">
    <location>
        <position position="108"/>
    </location>
    <ligand>
        <name>S-adenosyl-L-methionine</name>
        <dbReference type="ChEBI" id="CHEBI:59789"/>
    </ligand>
</feature>
<feature type="binding site" evidence="1">
    <location>
        <position position="115"/>
    </location>
    <ligand>
        <name>S-adenosyl-L-methionine</name>
        <dbReference type="ChEBI" id="CHEBI:59789"/>
    </ligand>
</feature>
<evidence type="ECO:0000255" key="1">
    <source>
        <dbReference type="HAMAP-Rule" id="MF_01007"/>
    </source>
</evidence>
<organism>
    <name type="scientific">Yersinia pestis bv. Antiqua (strain Antiqua)</name>
    <dbReference type="NCBI Taxonomy" id="360102"/>
    <lineage>
        <taxon>Bacteria</taxon>
        <taxon>Pseudomonadati</taxon>
        <taxon>Pseudomonadota</taxon>
        <taxon>Gammaproteobacteria</taxon>
        <taxon>Enterobacterales</taxon>
        <taxon>Yersiniaceae</taxon>
        <taxon>Yersinia</taxon>
    </lineage>
</organism>
<proteinExistence type="inferred from homology"/>
<protein>
    <recommendedName>
        <fullName evidence="1">Ribosomal RNA small subunit methyltransferase H</fullName>
        <ecNumber evidence="1">2.1.1.199</ecNumber>
    </recommendedName>
    <alternativeName>
        <fullName evidence="1">16S rRNA m(4)C1402 methyltransferase</fullName>
    </alternativeName>
    <alternativeName>
        <fullName evidence="1">rRNA (cytosine-N(4)-)-methyltransferase RsmH</fullName>
    </alternativeName>
</protein>
<accession>Q1C206</accession>
<comment type="function">
    <text evidence="1">Specifically methylates the N4 position of cytidine in position 1402 (C1402) of 16S rRNA.</text>
</comment>
<comment type="catalytic activity">
    <reaction evidence="1">
        <text>cytidine(1402) in 16S rRNA + S-adenosyl-L-methionine = N(4)-methylcytidine(1402) in 16S rRNA + S-adenosyl-L-homocysteine + H(+)</text>
        <dbReference type="Rhea" id="RHEA:42928"/>
        <dbReference type="Rhea" id="RHEA-COMP:10286"/>
        <dbReference type="Rhea" id="RHEA-COMP:10287"/>
        <dbReference type="ChEBI" id="CHEBI:15378"/>
        <dbReference type="ChEBI" id="CHEBI:57856"/>
        <dbReference type="ChEBI" id="CHEBI:59789"/>
        <dbReference type="ChEBI" id="CHEBI:74506"/>
        <dbReference type="ChEBI" id="CHEBI:82748"/>
        <dbReference type="EC" id="2.1.1.199"/>
    </reaction>
</comment>
<comment type="subcellular location">
    <subcellularLocation>
        <location evidence="1">Cytoplasm</location>
    </subcellularLocation>
</comment>
<comment type="similarity">
    <text evidence="1">Belongs to the methyltransferase superfamily. RsmH family.</text>
</comment>